<keyword id="KW-0963">Cytoplasm</keyword>
<keyword id="KW-0342">GTP-binding</keyword>
<keyword id="KW-0378">Hydrolase</keyword>
<keyword id="KW-0460">Magnesium</keyword>
<keyword id="KW-0479">Metal-binding</keyword>
<keyword id="KW-0547">Nucleotide-binding</keyword>
<keyword id="KW-1185">Reference proteome</keyword>
<evidence type="ECO:0000255" key="1">
    <source>
        <dbReference type="HAMAP-Rule" id="MF_01454"/>
    </source>
</evidence>
<evidence type="ECO:0000255" key="2">
    <source>
        <dbReference type="PROSITE-ProRule" id="PRU01229"/>
    </source>
</evidence>
<evidence type="ECO:0000255" key="3">
    <source>
        <dbReference type="PROSITE-ProRule" id="PRU01231"/>
    </source>
</evidence>
<evidence type="ECO:0000256" key="4">
    <source>
        <dbReference type="SAM" id="MobiDB-lite"/>
    </source>
</evidence>
<accession>A0JXJ8</accession>
<comment type="function">
    <text evidence="1">An essential GTPase which binds GTP, GDP and possibly (p)ppGpp with moderate affinity, with high nucleotide exchange rates and a fairly low GTP hydrolysis rate. Plays a role in control of the cell cycle, stress response, ribosome biogenesis and in those bacteria that undergo differentiation, in morphogenesis control.</text>
</comment>
<comment type="cofactor">
    <cofactor evidence="1">
        <name>Mg(2+)</name>
        <dbReference type="ChEBI" id="CHEBI:18420"/>
    </cofactor>
</comment>
<comment type="subunit">
    <text evidence="1">Monomer.</text>
</comment>
<comment type="subcellular location">
    <subcellularLocation>
        <location evidence="1">Cytoplasm</location>
    </subcellularLocation>
</comment>
<comment type="similarity">
    <text evidence="1">Belongs to the TRAFAC class OBG-HflX-like GTPase superfamily. OBG GTPase family.</text>
</comment>
<reference key="1">
    <citation type="journal article" date="2013" name="Stand. Genomic Sci.">
        <title>Complete genome sequence of Arthrobacter sp. strain FB24.</title>
        <authorList>
            <person name="Nakatsu C.H."/>
            <person name="Barabote R."/>
            <person name="Thompson S."/>
            <person name="Bruce D."/>
            <person name="Detter C."/>
            <person name="Brettin T."/>
            <person name="Han C."/>
            <person name="Beasley F."/>
            <person name="Chen W."/>
            <person name="Konopka A."/>
            <person name="Xie G."/>
        </authorList>
    </citation>
    <scope>NUCLEOTIDE SEQUENCE [LARGE SCALE GENOMIC DNA]</scope>
    <source>
        <strain>FB24</strain>
    </source>
</reference>
<sequence>MASFVDRVVLHVSGGTGGHGCVSVHREKFKPLGGPDGGNGGDGGDVILRVDPQTTTLLDYHHAPHRHATNGGPGMGDWRGGKNGETLILPVPEGTVVKTKDGRVLADLVGEGTEFIAAAGGPGGLGNAALSSQKRRAPGFALLGIEGESSDIVLELKSIADIALVGFPSAGKSSLIAAMSAARPKIADYPFTTLIPNLGVVQAGDVRFTIADVPGLIEGASEGKGLGHHFLRHVERCAALVHVLDCGTLEADRDPLSDLAIIEAELEKYAVDMSYAGTDGEVVPLNHRPRLVALNKVDLPDGKDMAEFVRPELESRGYRVFEISATSHEGLRQLGFAMAEIVKAARDAVAATPPKVHAPVLRPRAVNEAGFKIRREEKNLEPLFRVLGDKPVRWVKQTDFTNEEAIGYLADRLAKLGVENELFKQGAKPGDTVVIGEDDGVVFDWEPTMMAGAELLASPRGTDVRFADIGDRPTRGQKRDEQQERRDAKAAARAELEAERKAGIWTESVSGRRAARPLQESGLTTENEE</sequence>
<organism>
    <name type="scientific">Arthrobacter sp. (strain FB24)</name>
    <dbReference type="NCBI Taxonomy" id="290399"/>
    <lineage>
        <taxon>Bacteria</taxon>
        <taxon>Bacillati</taxon>
        <taxon>Actinomycetota</taxon>
        <taxon>Actinomycetes</taxon>
        <taxon>Micrococcales</taxon>
        <taxon>Micrococcaceae</taxon>
        <taxon>Arthrobacter</taxon>
    </lineage>
</organism>
<feature type="chain" id="PRO_0000385706" description="GTPase Obg">
    <location>
        <begin position="1"/>
        <end position="529"/>
    </location>
</feature>
<feature type="domain" description="Obg" evidence="3">
    <location>
        <begin position="2"/>
        <end position="159"/>
    </location>
</feature>
<feature type="domain" description="OBG-type G" evidence="1">
    <location>
        <begin position="160"/>
        <end position="343"/>
    </location>
</feature>
<feature type="domain" description="OCT" evidence="2">
    <location>
        <begin position="363"/>
        <end position="447"/>
    </location>
</feature>
<feature type="region of interest" description="Disordered" evidence="4">
    <location>
        <begin position="466"/>
        <end position="529"/>
    </location>
</feature>
<feature type="compositionally biased region" description="Basic and acidic residues" evidence="4">
    <location>
        <begin position="466"/>
        <end position="502"/>
    </location>
</feature>
<feature type="binding site" evidence="1">
    <location>
        <begin position="166"/>
        <end position="173"/>
    </location>
    <ligand>
        <name>GTP</name>
        <dbReference type="ChEBI" id="CHEBI:37565"/>
    </ligand>
</feature>
<feature type="binding site" evidence="1">
    <location>
        <position position="173"/>
    </location>
    <ligand>
        <name>Mg(2+)</name>
        <dbReference type="ChEBI" id="CHEBI:18420"/>
    </ligand>
</feature>
<feature type="binding site" evidence="1">
    <location>
        <begin position="191"/>
        <end position="195"/>
    </location>
    <ligand>
        <name>GTP</name>
        <dbReference type="ChEBI" id="CHEBI:37565"/>
    </ligand>
</feature>
<feature type="binding site" evidence="1">
    <location>
        <position position="193"/>
    </location>
    <ligand>
        <name>Mg(2+)</name>
        <dbReference type="ChEBI" id="CHEBI:18420"/>
    </ligand>
</feature>
<feature type="binding site" evidence="1">
    <location>
        <begin position="212"/>
        <end position="215"/>
    </location>
    <ligand>
        <name>GTP</name>
        <dbReference type="ChEBI" id="CHEBI:37565"/>
    </ligand>
</feature>
<feature type="binding site" evidence="1">
    <location>
        <begin position="295"/>
        <end position="298"/>
    </location>
    <ligand>
        <name>GTP</name>
        <dbReference type="ChEBI" id="CHEBI:37565"/>
    </ligand>
</feature>
<feature type="binding site" evidence="1">
    <location>
        <begin position="324"/>
        <end position="326"/>
    </location>
    <ligand>
        <name>GTP</name>
        <dbReference type="ChEBI" id="CHEBI:37565"/>
    </ligand>
</feature>
<dbReference type="EC" id="3.6.5.-" evidence="1"/>
<dbReference type="EMBL" id="CP000454">
    <property type="protein sequence ID" value="ABK03768.1"/>
    <property type="molecule type" value="Genomic_DNA"/>
</dbReference>
<dbReference type="RefSeq" id="WP_011692232.1">
    <property type="nucleotide sequence ID" value="NC_008541.1"/>
</dbReference>
<dbReference type="SMR" id="A0JXJ8"/>
<dbReference type="STRING" id="290399.Arth_2389"/>
<dbReference type="KEGG" id="art:Arth_2389"/>
<dbReference type="eggNOG" id="COG0536">
    <property type="taxonomic scope" value="Bacteria"/>
</dbReference>
<dbReference type="HOGENOM" id="CLU_011747_1_1_11"/>
<dbReference type="OrthoDB" id="9807318at2"/>
<dbReference type="Proteomes" id="UP000000754">
    <property type="component" value="Chromosome"/>
</dbReference>
<dbReference type="GO" id="GO:0005737">
    <property type="term" value="C:cytoplasm"/>
    <property type="evidence" value="ECO:0007669"/>
    <property type="project" value="UniProtKB-SubCell"/>
</dbReference>
<dbReference type="GO" id="GO:0005525">
    <property type="term" value="F:GTP binding"/>
    <property type="evidence" value="ECO:0007669"/>
    <property type="project" value="UniProtKB-UniRule"/>
</dbReference>
<dbReference type="GO" id="GO:0003924">
    <property type="term" value="F:GTPase activity"/>
    <property type="evidence" value="ECO:0007669"/>
    <property type="project" value="UniProtKB-UniRule"/>
</dbReference>
<dbReference type="GO" id="GO:0000287">
    <property type="term" value="F:magnesium ion binding"/>
    <property type="evidence" value="ECO:0007669"/>
    <property type="project" value="InterPro"/>
</dbReference>
<dbReference type="GO" id="GO:0042254">
    <property type="term" value="P:ribosome biogenesis"/>
    <property type="evidence" value="ECO:0007669"/>
    <property type="project" value="UniProtKB-UniRule"/>
</dbReference>
<dbReference type="CDD" id="cd01898">
    <property type="entry name" value="Obg"/>
    <property type="match status" value="1"/>
</dbReference>
<dbReference type="FunFam" id="2.70.210.12:FF:000001">
    <property type="entry name" value="GTPase Obg"/>
    <property type="match status" value="1"/>
</dbReference>
<dbReference type="Gene3D" id="3.30.300.350">
    <property type="entry name" value="GTP-binding protein OBG, C-terminal domain"/>
    <property type="match status" value="1"/>
</dbReference>
<dbReference type="Gene3D" id="2.70.210.12">
    <property type="entry name" value="GTP1/OBG domain"/>
    <property type="match status" value="1"/>
</dbReference>
<dbReference type="Gene3D" id="3.40.50.300">
    <property type="entry name" value="P-loop containing nucleotide triphosphate hydrolases"/>
    <property type="match status" value="1"/>
</dbReference>
<dbReference type="HAMAP" id="MF_01454">
    <property type="entry name" value="GTPase_Obg"/>
    <property type="match status" value="1"/>
</dbReference>
<dbReference type="InterPro" id="IPR031167">
    <property type="entry name" value="G_OBG"/>
</dbReference>
<dbReference type="InterPro" id="IPR006073">
    <property type="entry name" value="GTP-bd"/>
</dbReference>
<dbReference type="InterPro" id="IPR014100">
    <property type="entry name" value="GTP-bd_Obg/CgtA"/>
</dbReference>
<dbReference type="InterPro" id="IPR036346">
    <property type="entry name" value="GTP-bd_prot_GTP1/OBG_C_sf"/>
</dbReference>
<dbReference type="InterPro" id="IPR006074">
    <property type="entry name" value="GTP1-OBG_CS"/>
</dbReference>
<dbReference type="InterPro" id="IPR006169">
    <property type="entry name" value="GTP1_OBG_dom"/>
</dbReference>
<dbReference type="InterPro" id="IPR036726">
    <property type="entry name" value="GTP1_OBG_dom_sf"/>
</dbReference>
<dbReference type="InterPro" id="IPR045086">
    <property type="entry name" value="OBG_GTPase"/>
</dbReference>
<dbReference type="InterPro" id="IPR015349">
    <property type="entry name" value="OCT_dom"/>
</dbReference>
<dbReference type="InterPro" id="IPR027417">
    <property type="entry name" value="P-loop_NTPase"/>
</dbReference>
<dbReference type="NCBIfam" id="TIGR02729">
    <property type="entry name" value="Obg_CgtA"/>
    <property type="match status" value="1"/>
</dbReference>
<dbReference type="NCBIfam" id="TIGR03595">
    <property type="entry name" value="Obg_CgtA_exten"/>
    <property type="match status" value="1"/>
</dbReference>
<dbReference type="NCBIfam" id="NF008954">
    <property type="entry name" value="PRK12296.1"/>
    <property type="match status" value="1"/>
</dbReference>
<dbReference type="NCBIfam" id="NF008955">
    <property type="entry name" value="PRK12297.1"/>
    <property type="match status" value="1"/>
</dbReference>
<dbReference type="NCBIfam" id="NF008956">
    <property type="entry name" value="PRK12299.1"/>
    <property type="match status" value="1"/>
</dbReference>
<dbReference type="PANTHER" id="PTHR11702">
    <property type="entry name" value="DEVELOPMENTALLY REGULATED GTP-BINDING PROTEIN-RELATED"/>
    <property type="match status" value="1"/>
</dbReference>
<dbReference type="PANTHER" id="PTHR11702:SF31">
    <property type="entry name" value="MITOCHONDRIAL RIBOSOME-ASSOCIATED GTPASE 2"/>
    <property type="match status" value="1"/>
</dbReference>
<dbReference type="Pfam" id="PF09269">
    <property type="entry name" value="DUF1967"/>
    <property type="match status" value="1"/>
</dbReference>
<dbReference type="Pfam" id="PF01018">
    <property type="entry name" value="GTP1_OBG"/>
    <property type="match status" value="1"/>
</dbReference>
<dbReference type="Pfam" id="PF01926">
    <property type="entry name" value="MMR_HSR1"/>
    <property type="match status" value="1"/>
</dbReference>
<dbReference type="PRINTS" id="PR00326">
    <property type="entry name" value="GTP1OBG"/>
</dbReference>
<dbReference type="SUPFAM" id="SSF102741">
    <property type="entry name" value="Obg GTP-binding protein C-terminal domain"/>
    <property type="match status" value="1"/>
</dbReference>
<dbReference type="SUPFAM" id="SSF82051">
    <property type="entry name" value="Obg GTP-binding protein N-terminal domain"/>
    <property type="match status" value="1"/>
</dbReference>
<dbReference type="SUPFAM" id="SSF52540">
    <property type="entry name" value="P-loop containing nucleoside triphosphate hydrolases"/>
    <property type="match status" value="1"/>
</dbReference>
<dbReference type="PROSITE" id="PS51710">
    <property type="entry name" value="G_OBG"/>
    <property type="match status" value="1"/>
</dbReference>
<dbReference type="PROSITE" id="PS00905">
    <property type="entry name" value="GTP1_OBG"/>
    <property type="match status" value="1"/>
</dbReference>
<dbReference type="PROSITE" id="PS51883">
    <property type="entry name" value="OBG"/>
    <property type="match status" value="1"/>
</dbReference>
<dbReference type="PROSITE" id="PS51881">
    <property type="entry name" value="OCT"/>
    <property type="match status" value="1"/>
</dbReference>
<proteinExistence type="inferred from homology"/>
<protein>
    <recommendedName>
        <fullName evidence="1">GTPase Obg</fullName>
        <ecNumber evidence="1">3.6.5.-</ecNumber>
    </recommendedName>
    <alternativeName>
        <fullName evidence="1">GTP-binding protein Obg</fullName>
    </alternativeName>
</protein>
<gene>
    <name evidence="1" type="primary">obg</name>
    <name type="ordered locus">Arth_2389</name>
</gene>
<name>OBG_ARTS2</name>